<name>CLPX_BACC2</name>
<reference key="1">
    <citation type="submission" date="2008-10" db="EMBL/GenBank/DDBJ databases">
        <title>Genome sequence of Bacillus cereus G9842.</title>
        <authorList>
            <person name="Dodson R.J."/>
            <person name="Durkin A.S."/>
            <person name="Rosovitz M.J."/>
            <person name="Rasko D.A."/>
            <person name="Hoffmaster A."/>
            <person name="Ravel J."/>
            <person name="Sutton G."/>
        </authorList>
    </citation>
    <scope>NUCLEOTIDE SEQUENCE [LARGE SCALE GENOMIC DNA]</scope>
    <source>
        <strain>G9842</strain>
    </source>
</reference>
<feature type="chain" id="PRO_1000189682" description="ATP-dependent Clp protease ATP-binding subunit ClpX">
    <location>
        <begin position="1"/>
        <end position="419"/>
    </location>
</feature>
<feature type="domain" description="ClpX-type ZB" evidence="2">
    <location>
        <begin position="1"/>
        <end position="54"/>
    </location>
</feature>
<feature type="binding site" evidence="2">
    <location>
        <position position="13"/>
    </location>
    <ligand>
        <name>Zn(2+)</name>
        <dbReference type="ChEBI" id="CHEBI:29105"/>
    </ligand>
</feature>
<feature type="binding site" evidence="2">
    <location>
        <position position="16"/>
    </location>
    <ligand>
        <name>Zn(2+)</name>
        <dbReference type="ChEBI" id="CHEBI:29105"/>
    </ligand>
</feature>
<feature type="binding site" evidence="2">
    <location>
        <position position="35"/>
    </location>
    <ligand>
        <name>Zn(2+)</name>
        <dbReference type="ChEBI" id="CHEBI:29105"/>
    </ligand>
</feature>
<feature type="binding site" evidence="2">
    <location>
        <position position="38"/>
    </location>
    <ligand>
        <name>Zn(2+)</name>
        <dbReference type="ChEBI" id="CHEBI:29105"/>
    </ligand>
</feature>
<feature type="binding site" evidence="1">
    <location>
        <begin position="117"/>
        <end position="124"/>
    </location>
    <ligand>
        <name>ATP</name>
        <dbReference type="ChEBI" id="CHEBI:30616"/>
    </ligand>
</feature>
<sequence>MFKFNDEKGQLKCSFCGKTQTQVRKLVAGPGVYICDECIELCTEIVQEELAKDEEVEFKDVPKPVEIREILDEYVIGQDSAKKALAVAVYNHYKRINSNSKIDDVELAKSNIALIGPTGSGKTLLAQTLARILNVPFAIADATSLTEAGYVGEDVENILLKLIQAADYDVEKAEKGIIYIDEIDKVARKSENPSITRDVSGEGVQQALLKILEGTVASVPPQGGRKHPHQEFIQIDTTNILFICGGAFDGIEPIIKRRLGEKVIGFGSEKKNADVNEKHVLSHVLPEDLLRFGLIPEFIGRLPVIANLEPLDEDALVDILTKPKNALVKQFQKLLELDDVELEFEEGALIEIAKKAIERKTGARGLRSIIEGLMLDVMFELPSRKDIEKCILTKETVADNEPPKLVLQDGTVLDTKTSA</sequence>
<gene>
    <name evidence="1" type="primary">clpX</name>
    <name type="ordered locus">BCG9842_B0644</name>
</gene>
<dbReference type="EMBL" id="CP001186">
    <property type="protein sequence ID" value="ACK95053.1"/>
    <property type="molecule type" value="Genomic_DNA"/>
</dbReference>
<dbReference type="RefSeq" id="WP_000472289.1">
    <property type="nucleotide sequence ID" value="NC_011772.1"/>
</dbReference>
<dbReference type="SMR" id="B7IIY3"/>
<dbReference type="GeneID" id="72451148"/>
<dbReference type="KEGG" id="bcg:BCG9842_B0644"/>
<dbReference type="HOGENOM" id="CLU_014218_8_2_9"/>
<dbReference type="Proteomes" id="UP000006744">
    <property type="component" value="Chromosome"/>
</dbReference>
<dbReference type="GO" id="GO:0009376">
    <property type="term" value="C:HslUV protease complex"/>
    <property type="evidence" value="ECO:0007669"/>
    <property type="project" value="TreeGrafter"/>
</dbReference>
<dbReference type="GO" id="GO:0005524">
    <property type="term" value="F:ATP binding"/>
    <property type="evidence" value="ECO:0007669"/>
    <property type="project" value="UniProtKB-UniRule"/>
</dbReference>
<dbReference type="GO" id="GO:0016887">
    <property type="term" value="F:ATP hydrolysis activity"/>
    <property type="evidence" value="ECO:0007669"/>
    <property type="project" value="InterPro"/>
</dbReference>
<dbReference type="GO" id="GO:0140662">
    <property type="term" value="F:ATP-dependent protein folding chaperone"/>
    <property type="evidence" value="ECO:0007669"/>
    <property type="project" value="InterPro"/>
</dbReference>
<dbReference type="GO" id="GO:0046983">
    <property type="term" value="F:protein dimerization activity"/>
    <property type="evidence" value="ECO:0007669"/>
    <property type="project" value="InterPro"/>
</dbReference>
<dbReference type="GO" id="GO:0051082">
    <property type="term" value="F:unfolded protein binding"/>
    <property type="evidence" value="ECO:0007669"/>
    <property type="project" value="UniProtKB-UniRule"/>
</dbReference>
<dbReference type="GO" id="GO:0008270">
    <property type="term" value="F:zinc ion binding"/>
    <property type="evidence" value="ECO:0007669"/>
    <property type="project" value="InterPro"/>
</dbReference>
<dbReference type="GO" id="GO:0051301">
    <property type="term" value="P:cell division"/>
    <property type="evidence" value="ECO:0007669"/>
    <property type="project" value="TreeGrafter"/>
</dbReference>
<dbReference type="GO" id="GO:0051603">
    <property type="term" value="P:proteolysis involved in protein catabolic process"/>
    <property type="evidence" value="ECO:0007669"/>
    <property type="project" value="TreeGrafter"/>
</dbReference>
<dbReference type="CDD" id="cd19497">
    <property type="entry name" value="RecA-like_ClpX"/>
    <property type="match status" value="1"/>
</dbReference>
<dbReference type="FunFam" id="1.10.8.60:FF:000002">
    <property type="entry name" value="ATP-dependent Clp protease ATP-binding subunit ClpX"/>
    <property type="match status" value="1"/>
</dbReference>
<dbReference type="FunFam" id="3.40.50.300:FF:000005">
    <property type="entry name" value="ATP-dependent Clp protease ATP-binding subunit ClpX"/>
    <property type="match status" value="1"/>
</dbReference>
<dbReference type="Gene3D" id="1.10.8.60">
    <property type="match status" value="1"/>
</dbReference>
<dbReference type="Gene3D" id="6.20.220.10">
    <property type="entry name" value="ClpX chaperone, C4-type zinc finger domain"/>
    <property type="match status" value="1"/>
</dbReference>
<dbReference type="Gene3D" id="3.40.50.300">
    <property type="entry name" value="P-loop containing nucleotide triphosphate hydrolases"/>
    <property type="match status" value="1"/>
</dbReference>
<dbReference type="HAMAP" id="MF_00175">
    <property type="entry name" value="ClpX"/>
    <property type="match status" value="1"/>
</dbReference>
<dbReference type="InterPro" id="IPR003593">
    <property type="entry name" value="AAA+_ATPase"/>
</dbReference>
<dbReference type="InterPro" id="IPR050052">
    <property type="entry name" value="ATP-dep_Clp_protease_ClpX"/>
</dbReference>
<dbReference type="InterPro" id="IPR003959">
    <property type="entry name" value="ATPase_AAA_core"/>
</dbReference>
<dbReference type="InterPro" id="IPR019489">
    <property type="entry name" value="Clp_ATPase_C"/>
</dbReference>
<dbReference type="InterPro" id="IPR004487">
    <property type="entry name" value="Clp_protease_ATP-bd_su_ClpX"/>
</dbReference>
<dbReference type="InterPro" id="IPR046425">
    <property type="entry name" value="ClpX_bact"/>
</dbReference>
<dbReference type="InterPro" id="IPR027417">
    <property type="entry name" value="P-loop_NTPase"/>
</dbReference>
<dbReference type="InterPro" id="IPR010603">
    <property type="entry name" value="Znf_CppX_C4"/>
</dbReference>
<dbReference type="InterPro" id="IPR038366">
    <property type="entry name" value="Znf_CppX_C4_sf"/>
</dbReference>
<dbReference type="NCBIfam" id="TIGR00382">
    <property type="entry name" value="clpX"/>
    <property type="match status" value="1"/>
</dbReference>
<dbReference type="NCBIfam" id="NF003745">
    <property type="entry name" value="PRK05342.1"/>
    <property type="match status" value="1"/>
</dbReference>
<dbReference type="PANTHER" id="PTHR48102:SF7">
    <property type="entry name" value="ATP-DEPENDENT CLP PROTEASE ATP-BINDING SUBUNIT CLPX-LIKE, MITOCHONDRIAL"/>
    <property type="match status" value="1"/>
</dbReference>
<dbReference type="PANTHER" id="PTHR48102">
    <property type="entry name" value="ATP-DEPENDENT CLP PROTEASE ATP-BINDING SUBUNIT CLPX-LIKE, MITOCHONDRIAL-RELATED"/>
    <property type="match status" value="1"/>
</dbReference>
<dbReference type="Pfam" id="PF07724">
    <property type="entry name" value="AAA_2"/>
    <property type="match status" value="1"/>
</dbReference>
<dbReference type="Pfam" id="PF10431">
    <property type="entry name" value="ClpB_D2-small"/>
    <property type="match status" value="1"/>
</dbReference>
<dbReference type="Pfam" id="PF06689">
    <property type="entry name" value="zf-C4_ClpX"/>
    <property type="match status" value="1"/>
</dbReference>
<dbReference type="SMART" id="SM00382">
    <property type="entry name" value="AAA"/>
    <property type="match status" value="1"/>
</dbReference>
<dbReference type="SMART" id="SM01086">
    <property type="entry name" value="ClpB_D2-small"/>
    <property type="match status" value="1"/>
</dbReference>
<dbReference type="SMART" id="SM00994">
    <property type="entry name" value="zf-C4_ClpX"/>
    <property type="match status" value="1"/>
</dbReference>
<dbReference type="SUPFAM" id="SSF57716">
    <property type="entry name" value="Glucocorticoid receptor-like (DNA-binding domain)"/>
    <property type="match status" value="1"/>
</dbReference>
<dbReference type="SUPFAM" id="SSF52540">
    <property type="entry name" value="P-loop containing nucleoside triphosphate hydrolases"/>
    <property type="match status" value="1"/>
</dbReference>
<dbReference type="PROSITE" id="PS51902">
    <property type="entry name" value="CLPX_ZB"/>
    <property type="match status" value="1"/>
</dbReference>
<comment type="function">
    <text evidence="1">ATP-dependent specificity component of the Clp protease. It directs the protease to specific substrates. Can perform chaperone functions in the absence of ClpP.</text>
</comment>
<comment type="subunit">
    <text evidence="1">Component of the ClpX-ClpP complex. Forms a hexameric ring that, in the presence of ATP, binds to fourteen ClpP subunits assembled into a disk-like structure with a central cavity, resembling the structure of eukaryotic proteasomes.</text>
</comment>
<comment type="similarity">
    <text evidence="1">Belongs to the ClpX chaperone family.</text>
</comment>
<keyword id="KW-0067">ATP-binding</keyword>
<keyword id="KW-0143">Chaperone</keyword>
<keyword id="KW-0479">Metal-binding</keyword>
<keyword id="KW-0547">Nucleotide-binding</keyword>
<keyword id="KW-0862">Zinc</keyword>
<evidence type="ECO:0000255" key="1">
    <source>
        <dbReference type="HAMAP-Rule" id="MF_00175"/>
    </source>
</evidence>
<evidence type="ECO:0000255" key="2">
    <source>
        <dbReference type="PROSITE-ProRule" id="PRU01250"/>
    </source>
</evidence>
<protein>
    <recommendedName>
        <fullName evidence="1">ATP-dependent Clp protease ATP-binding subunit ClpX</fullName>
    </recommendedName>
</protein>
<accession>B7IIY3</accession>
<organism>
    <name type="scientific">Bacillus cereus (strain G9842)</name>
    <dbReference type="NCBI Taxonomy" id="405531"/>
    <lineage>
        <taxon>Bacteria</taxon>
        <taxon>Bacillati</taxon>
        <taxon>Bacillota</taxon>
        <taxon>Bacilli</taxon>
        <taxon>Bacillales</taxon>
        <taxon>Bacillaceae</taxon>
        <taxon>Bacillus</taxon>
        <taxon>Bacillus cereus group</taxon>
    </lineage>
</organism>
<proteinExistence type="inferred from homology"/>